<organism>
    <name type="scientific">Orientia tsutsugamushi (strain Boryong)</name>
    <name type="common">Rickettsia tsutsugamushi</name>
    <dbReference type="NCBI Taxonomy" id="357244"/>
    <lineage>
        <taxon>Bacteria</taxon>
        <taxon>Pseudomonadati</taxon>
        <taxon>Pseudomonadota</taxon>
        <taxon>Alphaproteobacteria</taxon>
        <taxon>Rickettsiales</taxon>
        <taxon>Rickettsiaceae</taxon>
        <taxon>Rickettsieae</taxon>
        <taxon>Orientia</taxon>
    </lineage>
</organism>
<name>RS2_ORITB</name>
<dbReference type="EMBL" id="AM494475">
    <property type="protein sequence ID" value="CAM80204.1"/>
    <property type="status" value="ALT_INIT"/>
    <property type="molecule type" value="Genomic_DNA"/>
</dbReference>
<dbReference type="SMR" id="A5CE04"/>
<dbReference type="KEGG" id="ots:OTBS_1138"/>
<dbReference type="eggNOG" id="COG0052">
    <property type="taxonomic scope" value="Bacteria"/>
</dbReference>
<dbReference type="HOGENOM" id="CLU_040318_2_1_5"/>
<dbReference type="Proteomes" id="UP000001565">
    <property type="component" value="Chromosome"/>
</dbReference>
<dbReference type="GO" id="GO:0015935">
    <property type="term" value="C:small ribosomal subunit"/>
    <property type="evidence" value="ECO:0007669"/>
    <property type="project" value="InterPro"/>
</dbReference>
<dbReference type="GO" id="GO:0003735">
    <property type="term" value="F:structural constituent of ribosome"/>
    <property type="evidence" value="ECO:0007669"/>
    <property type="project" value="InterPro"/>
</dbReference>
<dbReference type="GO" id="GO:0006412">
    <property type="term" value="P:translation"/>
    <property type="evidence" value="ECO:0007669"/>
    <property type="project" value="UniProtKB-UniRule"/>
</dbReference>
<dbReference type="CDD" id="cd01425">
    <property type="entry name" value="RPS2"/>
    <property type="match status" value="1"/>
</dbReference>
<dbReference type="Gene3D" id="3.40.50.10490">
    <property type="entry name" value="Glucose-6-phosphate isomerase like protein, domain 1"/>
    <property type="match status" value="1"/>
</dbReference>
<dbReference type="Gene3D" id="1.10.287.610">
    <property type="entry name" value="Helix hairpin bin"/>
    <property type="match status" value="1"/>
</dbReference>
<dbReference type="HAMAP" id="MF_00291_B">
    <property type="entry name" value="Ribosomal_uS2_B"/>
    <property type="match status" value="1"/>
</dbReference>
<dbReference type="InterPro" id="IPR001865">
    <property type="entry name" value="Ribosomal_uS2"/>
</dbReference>
<dbReference type="InterPro" id="IPR005706">
    <property type="entry name" value="Ribosomal_uS2_bac/mit/plastid"/>
</dbReference>
<dbReference type="InterPro" id="IPR018130">
    <property type="entry name" value="Ribosomal_uS2_CS"/>
</dbReference>
<dbReference type="InterPro" id="IPR023591">
    <property type="entry name" value="Ribosomal_uS2_flav_dom_sf"/>
</dbReference>
<dbReference type="NCBIfam" id="TIGR01011">
    <property type="entry name" value="rpsB_bact"/>
    <property type="match status" value="1"/>
</dbReference>
<dbReference type="PANTHER" id="PTHR12534">
    <property type="entry name" value="30S RIBOSOMAL PROTEIN S2 PROKARYOTIC AND ORGANELLAR"/>
    <property type="match status" value="1"/>
</dbReference>
<dbReference type="PANTHER" id="PTHR12534:SF0">
    <property type="entry name" value="SMALL RIBOSOMAL SUBUNIT PROTEIN US2M"/>
    <property type="match status" value="1"/>
</dbReference>
<dbReference type="Pfam" id="PF00318">
    <property type="entry name" value="Ribosomal_S2"/>
    <property type="match status" value="1"/>
</dbReference>
<dbReference type="PRINTS" id="PR00395">
    <property type="entry name" value="RIBOSOMALS2"/>
</dbReference>
<dbReference type="SUPFAM" id="SSF52313">
    <property type="entry name" value="Ribosomal protein S2"/>
    <property type="match status" value="1"/>
</dbReference>
<dbReference type="PROSITE" id="PS00963">
    <property type="entry name" value="RIBOSOMAL_S2_2"/>
    <property type="match status" value="1"/>
</dbReference>
<proteinExistence type="inferred from homology"/>
<evidence type="ECO:0000255" key="1">
    <source>
        <dbReference type="HAMAP-Rule" id="MF_00291"/>
    </source>
</evidence>
<evidence type="ECO:0000305" key="2"/>
<accession>A5CE04</accession>
<comment type="similarity">
    <text evidence="1">Belongs to the universal ribosomal protein uS2 family.</text>
</comment>
<comment type="sequence caution" evidence="2">
    <conflict type="erroneous initiation">
        <sequence resource="EMBL-CDS" id="CAM80204"/>
    </conflict>
</comment>
<reference key="1">
    <citation type="journal article" date="2007" name="Proc. Natl. Acad. Sci. U.S.A.">
        <title>The Orientia tsutsugamushi genome reveals massive proliferation of conjugative type IV secretion system and host-cell interaction genes.</title>
        <authorList>
            <person name="Cho N.-H."/>
            <person name="Kim H.-R."/>
            <person name="Lee J.-H."/>
            <person name="Kim S.-Y."/>
            <person name="Kim J."/>
            <person name="Cha S."/>
            <person name="Kim S.-Y."/>
            <person name="Darby A.C."/>
            <person name="Fuxelius H.-H."/>
            <person name="Yin J."/>
            <person name="Kim J.H."/>
            <person name="Kim J."/>
            <person name="Lee S.J."/>
            <person name="Koh Y.-S."/>
            <person name="Jang W.-J."/>
            <person name="Park K.-H."/>
            <person name="Andersson S.G.E."/>
            <person name="Choi M.-S."/>
            <person name="Kim I.-S."/>
        </authorList>
    </citation>
    <scope>NUCLEOTIDE SEQUENCE [LARGE SCALE GENOMIC DNA]</scope>
    <source>
        <strain>Boryong</strain>
    </source>
</reference>
<keyword id="KW-1185">Reference proteome</keyword>
<keyword id="KW-0687">Ribonucleoprotein</keyword>
<keyword id="KW-0689">Ribosomal protein</keyword>
<sequence>MSNNNISTLSSVTISELLDAGIHYGHKASRWNPKMAPYIYGKRDDVHIINLDYTVSQIDVISKVIYKEIKEKNGRILFVDTRRHRDIVAQYAENCGQYYVTHRWLGGMLTNWVTVSKAINKLDQLEKKLADPEKIVGYTKREILSMQRMRDNLHRSFGGIRNMGGKPTLLIVMDINKDHIAVKEARREKIPIIAIVDTNSDPDLVDYPIPGNDDAIRSIRLYCKIFSDAVLLAIEHMLAASGVDLGAINGDNPSERLKAAKKITKMKLSKKVTKINVEQDQNKLEKDNKDL</sequence>
<protein>
    <recommendedName>
        <fullName evidence="1">Small ribosomal subunit protein uS2</fullName>
    </recommendedName>
    <alternativeName>
        <fullName evidence="2">30S ribosomal protein S2</fullName>
    </alternativeName>
</protein>
<gene>
    <name evidence="1" type="primary">rpsB</name>
    <name type="ordered locus">OTBS_1138</name>
</gene>
<feature type="chain" id="PRO_0000352021" description="Small ribosomal subunit protein uS2">
    <location>
        <begin position="1"/>
        <end position="291"/>
    </location>
</feature>